<proteinExistence type="inferred from homology"/>
<name>SICA_SALTI</name>
<organism>
    <name type="scientific">Salmonella typhi</name>
    <dbReference type="NCBI Taxonomy" id="90370"/>
    <lineage>
        <taxon>Bacteria</taxon>
        <taxon>Pseudomonadati</taxon>
        <taxon>Pseudomonadota</taxon>
        <taxon>Gammaproteobacteria</taxon>
        <taxon>Enterobacterales</taxon>
        <taxon>Enterobacteriaceae</taxon>
        <taxon>Salmonella</taxon>
    </lineage>
</organism>
<sequence length="165" mass="19221">MDYQNNVSEERVAEMIWDAVSEGATLKDVHGIPQDMMDGLYAHAYEFYNQGRLDEAETFFRFLCIYDFYNPDYTMGLAAVCQLKKQFQKACDLYAVAFTLLKNDYRPVFFTGQCQLLMRKAAKARQCFELVNERTEDESLRAKALVYLEALKTAETEQHSEQEKE</sequence>
<protein>
    <recommendedName>
        <fullName>Chaperone protein SicA</fullName>
    </recommendedName>
    <alternativeName>
        <fullName>Salmonella invasin chaperone</fullName>
    </alternativeName>
</protein>
<comment type="function">
    <text evidence="1">Type III secretion-associated chaperone required for SipB and SipC stabilization. Prevents premature association of SipB with SipC, which may lead to their targeting for degradation. Along with InvF, required for transcription activation of sigDE (sopB pipC), sicAsipBCDA, and sopE (By similarity).</text>
</comment>
<comment type="subunit">
    <text evidence="1">Dimer or higher-order oligomers.</text>
</comment>
<comment type="subcellular location">
    <subcellularLocation>
        <location evidence="2">Cytoplasm</location>
    </subcellularLocation>
</comment>
<comment type="similarity">
    <text evidence="2">Belongs to the LcrH/SycD chaperone family.</text>
</comment>
<gene>
    <name type="primary">sicA</name>
    <name type="synonym">spaT</name>
    <name type="ordered locus">STY3009</name>
    <name type="ordered locus">t2788</name>
</gene>
<dbReference type="EMBL" id="X82670">
    <property type="protein sequence ID" value="CAA57987.1"/>
    <property type="molecule type" value="Genomic_DNA"/>
</dbReference>
<dbReference type="EMBL" id="AL513382">
    <property type="protein sequence ID" value="CAD05993.1"/>
    <property type="molecule type" value="Genomic_DNA"/>
</dbReference>
<dbReference type="EMBL" id="AE014613">
    <property type="protein sequence ID" value="AAO70349.1"/>
    <property type="molecule type" value="Genomic_DNA"/>
</dbReference>
<dbReference type="PIR" id="AB0851">
    <property type="entry name" value="AB0851"/>
</dbReference>
<dbReference type="PIR" id="S70217">
    <property type="entry name" value="S70217"/>
</dbReference>
<dbReference type="RefSeq" id="NP_457280.1">
    <property type="nucleotide sequence ID" value="NC_003198.1"/>
</dbReference>
<dbReference type="RefSeq" id="WP_000386309.1">
    <property type="nucleotide sequence ID" value="NZ_WSUR01000005.1"/>
</dbReference>
<dbReference type="SMR" id="P69065"/>
<dbReference type="STRING" id="220341.gene:17586903"/>
<dbReference type="GeneID" id="66757211"/>
<dbReference type="KEGG" id="stt:t2788"/>
<dbReference type="KEGG" id="sty:STY3009"/>
<dbReference type="PATRIC" id="fig|220341.7.peg.3063"/>
<dbReference type="eggNOG" id="COG0457">
    <property type="taxonomic scope" value="Bacteria"/>
</dbReference>
<dbReference type="HOGENOM" id="CLU_093829_1_0_6"/>
<dbReference type="OMA" id="FHSAECH"/>
<dbReference type="OrthoDB" id="8591320at2"/>
<dbReference type="Proteomes" id="UP000000541">
    <property type="component" value="Chromosome"/>
</dbReference>
<dbReference type="Proteomes" id="UP000002670">
    <property type="component" value="Chromosome"/>
</dbReference>
<dbReference type="GO" id="GO:0005737">
    <property type="term" value="C:cytoplasm"/>
    <property type="evidence" value="ECO:0007669"/>
    <property type="project" value="UniProtKB-SubCell"/>
</dbReference>
<dbReference type="FunFam" id="1.25.40.10:FF:000100">
    <property type="entry name" value="Type III secretion system translocator chaperone SicA"/>
    <property type="match status" value="1"/>
</dbReference>
<dbReference type="Gene3D" id="1.25.40.10">
    <property type="entry name" value="Tetratricopeptide repeat domain"/>
    <property type="match status" value="1"/>
</dbReference>
<dbReference type="InterPro" id="IPR005415">
    <property type="entry name" value="T3SS_Ca_resp_chp_LcrH/SycD"/>
</dbReference>
<dbReference type="InterPro" id="IPR016379">
    <property type="entry name" value="T3SS_Ca_resp_chp_LcrH/SycD_sub"/>
</dbReference>
<dbReference type="InterPro" id="IPR011716">
    <property type="entry name" value="TPR-3"/>
</dbReference>
<dbReference type="InterPro" id="IPR011990">
    <property type="entry name" value="TPR-like_helical_dom_sf"/>
</dbReference>
<dbReference type="NCBIfam" id="TIGR02552">
    <property type="entry name" value="LcrH_SycD"/>
    <property type="match status" value="1"/>
</dbReference>
<dbReference type="NCBIfam" id="NF011859">
    <property type="entry name" value="PRK15331.1"/>
    <property type="match status" value="1"/>
</dbReference>
<dbReference type="Pfam" id="PF07720">
    <property type="entry name" value="TPR_3"/>
    <property type="match status" value="2"/>
</dbReference>
<dbReference type="PIRSF" id="PIRSF003165">
    <property type="entry name" value="Chaperone_SicA"/>
    <property type="match status" value="1"/>
</dbReference>
<dbReference type="PRINTS" id="PR01595">
    <property type="entry name" value="SYCDCHAPRONE"/>
</dbReference>
<dbReference type="SUPFAM" id="SSF48452">
    <property type="entry name" value="TPR-like"/>
    <property type="match status" value="1"/>
</dbReference>
<accession>P69065</accession>
<accession>P40703</accession>
<accession>Q57260</accession>
<reference key="1">
    <citation type="journal article" date="1995" name="Mol. Microbiol.">
        <title>Functional conservation of the Salmonella and Shigella effectors of entry into epithelial cells.</title>
        <authorList>
            <person name="Hermant D."/>
            <person name="Menard R."/>
            <person name="Arricau N."/>
            <person name="Parsot C."/>
            <person name="Popoff M.Y."/>
        </authorList>
    </citation>
    <scope>NUCLEOTIDE SEQUENCE [GENOMIC DNA]</scope>
    <source>
        <strain>ATCC 700931 / Ty2</strain>
    </source>
</reference>
<reference key="2">
    <citation type="journal article" date="2001" name="Nature">
        <title>Complete genome sequence of a multiple drug resistant Salmonella enterica serovar Typhi CT18.</title>
        <authorList>
            <person name="Parkhill J."/>
            <person name="Dougan G."/>
            <person name="James K.D."/>
            <person name="Thomson N.R."/>
            <person name="Pickard D."/>
            <person name="Wain J."/>
            <person name="Churcher C.M."/>
            <person name="Mungall K.L."/>
            <person name="Bentley S.D."/>
            <person name="Holden M.T.G."/>
            <person name="Sebaihia M."/>
            <person name="Baker S."/>
            <person name="Basham D."/>
            <person name="Brooks K."/>
            <person name="Chillingworth T."/>
            <person name="Connerton P."/>
            <person name="Cronin A."/>
            <person name="Davis P."/>
            <person name="Davies R.M."/>
            <person name="Dowd L."/>
            <person name="White N."/>
            <person name="Farrar J."/>
            <person name="Feltwell T."/>
            <person name="Hamlin N."/>
            <person name="Haque A."/>
            <person name="Hien T.T."/>
            <person name="Holroyd S."/>
            <person name="Jagels K."/>
            <person name="Krogh A."/>
            <person name="Larsen T.S."/>
            <person name="Leather S."/>
            <person name="Moule S."/>
            <person name="O'Gaora P."/>
            <person name="Parry C."/>
            <person name="Quail M.A."/>
            <person name="Rutherford K.M."/>
            <person name="Simmonds M."/>
            <person name="Skelton J."/>
            <person name="Stevens K."/>
            <person name="Whitehead S."/>
            <person name="Barrell B.G."/>
        </authorList>
    </citation>
    <scope>NUCLEOTIDE SEQUENCE [LARGE SCALE GENOMIC DNA]</scope>
    <source>
        <strain>CT18</strain>
    </source>
</reference>
<reference key="3">
    <citation type="journal article" date="2003" name="J. Bacteriol.">
        <title>Comparative genomics of Salmonella enterica serovar Typhi strains Ty2 and CT18.</title>
        <authorList>
            <person name="Deng W."/>
            <person name="Liou S.-R."/>
            <person name="Plunkett G. III"/>
            <person name="Mayhew G.F."/>
            <person name="Rose D.J."/>
            <person name="Burland V."/>
            <person name="Kodoyianni V."/>
            <person name="Schwartz D.C."/>
            <person name="Blattner F.R."/>
        </authorList>
    </citation>
    <scope>NUCLEOTIDE SEQUENCE [LARGE SCALE GENOMIC DNA]</scope>
    <source>
        <strain>ATCC 700931 / Ty2</strain>
    </source>
</reference>
<keyword id="KW-0010">Activator</keyword>
<keyword id="KW-0143">Chaperone</keyword>
<keyword id="KW-0963">Cytoplasm</keyword>
<keyword id="KW-0804">Transcription</keyword>
<keyword id="KW-0805">Transcription regulation</keyword>
<keyword id="KW-0843">Virulence</keyword>
<evidence type="ECO:0000250" key="1"/>
<evidence type="ECO:0000305" key="2"/>
<feature type="chain" id="PRO_0000206488" description="Chaperone protein SicA">
    <location>
        <begin position="1"/>
        <end position="165"/>
    </location>
</feature>